<feature type="chain" id="PRO_0000257459" description="tRNA (guanine-N(1)-)-methyltransferase">
    <location>
        <begin position="1"/>
        <end position="248"/>
    </location>
</feature>
<feature type="binding site" evidence="1">
    <location>
        <position position="113"/>
    </location>
    <ligand>
        <name>S-adenosyl-L-methionine</name>
        <dbReference type="ChEBI" id="CHEBI:59789"/>
    </ligand>
</feature>
<feature type="binding site" evidence="1">
    <location>
        <begin position="133"/>
        <end position="138"/>
    </location>
    <ligand>
        <name>S-adenosyl-L-methionine</name>
        <dbReference type="ChEBI" id="CHEBI:59789"/>
    </ligand>
</feature>
<accession>Q21YL6</accession>
<reference key="1">
    <citation type="submission" date="2006-02" db="EMBL/GenBank/DDBJ databases">
        <title>Complete sequence of chromosome of Rhodoferax ferrireducens DSM 15236.</title>
        <authorList>
            <person name="Copeland A."/>
            <person name="Lucas S."/>
            <person name="Lapidus A."/>
            <person name="Barry K."/>
            <person name="Detter J.C."/>
            <person name="Glavina del Rio T."/>
            <person name="Hammon N."/>
            <person name="Israni S."/>
            <person name="Pitluck S."/>
            <person name="Brettin T."/>
            <person name="Bruce D."/>
            <person name="Han C."/>
            <person name="Tapia R."/>
            <person name="Gilna P."/>
            <person name="Kiss H."/>
            <person name="Schmutz J."/>
            <person name="Larimer F."/>
            <person name="Land M."/>
            <person name="Kyrpides N."/>
            <person name="Ivanova N."/>
            <person name="Richardson P."/>
        </authorList>
    </citation>
    <scope>NUCLEOTIDE SEQUENCE [LARGE SCALE GENOMIC DNA]</scope>
    <source>
        <strain>ATCC BAA-621 / DSM 15236 / T118</strain>
    </source>
</reference>
<keyword id="KW-0963">Cytoplasm</keyword>
<keyword id="KW-0489">Methyltransferase</keyword>
<keyword id="KW-1185">Reference proteome</keyword>
<keyword id="KW-0949">S-adenosyl-L-methionine</keyword>
<keyword id="KW-0808">Transferase</keyword>
<keyword id="KW-0819">tRNA processing</keyword>
<comment type="function">
    <text evidence="1">Specifically methylates guanosine-37 in various tRNAs.</text>
</comment>
<comment type="catalytic activity">
    <reaction evidence="1">
        <text>guanosine(37) in tRNA + S-adenosyl-L-methionine = N(1)-methylguanosine(37) in tRNA + S-adenosyl-L-homocysteine + H(+)</text>
        <dbReference type="Rhea" id="RHEA:36899"/>
        <dbReference type="Rhea" id="RHEA-COMP:10145"/>
        <dbReference type="Rhea" id="RHEA-COMP:10147"/>
        <dbReference type="ChEBI" id="CHEBI:15378"/>
        <dbReference type="ChEBI" id="CHEBI:57856"/>
        <dbReference type="ChEBI" id="CHEBI:59789"/>
        <dbReference type="ChEBI" id="CHEBI:73542"/>
        <dbReference type="ChEBI" id="CHEBI:74269"/>
        <dbReference type="EC" id="2.1.1.228"/>
    </reaction>
</comment>
<comment type="subunit">
    <text evidence="1">Homodimer.</text>
</comment>
<comment type="subcellular location">
    <subcellularLocation>
        <location evidence="1">Cytoplasm</location>
    </subcellularLocation>
</comment>
<comment type="similarity">
    <text evidence="1">Belongs to the RNA methyltransferase TrmD family.</text>
</comment>
<dbReference type="EC" id="2.1.1.228" evidence="1"/>
<dbReference type="EMBL" id="CP000267">
    <property type="protein sequence ID" value="ABD69137.1"/>
    <property type="molecule type" value="Genomic_DNA"/>
</dbReference>
<dbReference type="RefSeq" id="WP_011463705.1">
    <property type="nucleotide sequence ID" value="NC_007908.1"/>
</dbReference>
<dbReference type="SMR" id="Q21YL6"/>
<dbReference type="STRING" id="338969.Rfer_1404"/>
<dbReference type="KEGG" id="rfr:Rfer_1404"/>
<dbReference type="eggNOG" id="COG0336">
    <property type="taxonomic scope" value="Bacteria"/>
</dbReference>
<dbReference type="HOGENOM" id="CLU_047363_0_1_4"/>
<dbReference type="OrthoDB" id="9807416at2"/>
<dbReference type="Proteomes" id="UP000008332">
    <property type="component" value="Chromosome"/>
</dbReference>
<dbReference type="GO" id="GO:0005829">
    <property type="term" value="C:cytosol"/>
    <property type="evidence" value="ECO:0007669"/>
    <property type="project" value="TreeGrafter"/>
</dbReference>
<dbReference type="GO" id="GO:0052906">
    <property type="term" value="F:tRNA (guanine(37)-N1)-methyltransferase activity"/>
    <property type="evidence" value="ECO:0007669"/>
    <property type="project" value="UniProtKB-UniRule"/>
</dbReference>
<dbReference type="GO" id="GO:0002939">
    <property type="term" value="P:tRNA N1-guanine methylation"/>
    <property type="evidence" value="ECO:0007669"/>
    <property type="project" value="TreeGrafter"/>
</dbReference>
<dbReference type="CDD" id="cd18080">
    <property type="entry name" value="TrmD-like"/>
    <property type="match status" value="1"/>
</dbReference>
<dbReference type="FunFam" id="3.40.1280.10:FF:000001">
    <property type="entry name" value="tRNA (guanine-N(1)-)-methyltransferase"/>
    <property type="match status" value="1"/>
</dbReference>
<dbReference type="Gene3D" id="3.40.1280.10">
    <property type="match status" value="1"/>
</dbReference>
<dbReference type="Gene3D" id="1.10.1270.20">
    <property type="entry name" value="tRNA(m1g37)methyltransferase, domain 2"/>
    <property type="match status" value="1"/>
</dbReference>
<dbReference type="HAMAP" id="MF_00605">
    <property type="entry name" value="TrmD"/>
    <property type="match status" value="1"/>
</dbReference>
<dbReference type="InterPro" id="IPR029028">
    <property type="entry name" value="Alpha/beta_knot_MTases"/>
</dbReference>
<dbReference type="InterPro" id="IPR023148">
    <property type="entry name" value="tRNA_m1G_MeTrfase_C_sf"/>
</dbReference>
<dbReference type="InterPro" id="IPR002649">
    <property type="entry name" value="tRNA_m1G_MeTrfase_TrmD"/>
</dbReference>
<dbReference type="InterPro" id="IPR029026">
    <property type="entry name" value="tRNA_m1G_MTases_N"/>
</dbReference>
<dbReference type="InterPro" id="IPR016009">
    <property type="entry name" value="tRNA_MeTrfase_TRMD/TRM10"/>
</dbReference>
<dbReference type="NCBIfam" id="NF000648">
    <property type="entry name" value="PRK00026.1"/>
    <property type="match status" value="1"/>
</dbReference>
<dbReference type="NCBIfam" id="TIGR00088">
    <property type="entry name" value="trmD"/>
    <property type="match status" value="1"/>
</dbReference>
<dbReference type="PANTHER" id="PTHR46417">
    <property type="entry name" value="TRNA (GUANINE-N(1)-)-METHYLTRANSFERASE"/>
    <property type="match status" value="1"/>
</dbReference>
<dbReference type="PANTHER" id="PTHR46417:SF1">
    <property type="entry name" value="TRNA (GUANINE-N(1)-)-METHYLTRANSFERASE"/>
    <property type="match status" value="1"/>
</dbReference>
<dbReference type="Pfam" id="PF01746">
    <property type="entry name" value="tRNA_m1G_MT"/>
    <property type="match status" value="1"/>
</dbReference>
<dbReference type="PIRSF" id="PIRSF000386">
    <property type="entry name" value="tRNA_mtase"/>
    <property type="match status" value="1"/>
</dbReference>
<dbReference type="SUPFAM" id="SSF75217">
    <property type="entry name" value="alpha/beta knot"/>
    <property type="match status" value="1"/>
</dbReference>
<organism>
    <name type="scientific">Albidiferax ferrireducens (strain ATCC BAA-621 / DSM 15236 / T118)</name>
    <name type="common">Rhodoferax ferrireducens</name>
    <dbReference type="NCBI Taxonomy" id="338969"/>
    <lineage>
        <taxon>Bacteria</taxon>
        <taxon>Pseudomonadati</taxon>
        <taxon>Pseudomonadota</taxon>
        <taxon>Betaproteobacteria</taxon>
        <taxon>Burkholderiales</taxon>
        <taxon>Comamonadaceae</taxon>
        <taxon>Rhodoferax</taxon>
    </lineage>
</organism>
<proteinExistence type="inferred from homology"/>
<name>TRMD_ALBFT</name>
<gene>
    <name evidence="1" type="primary">trmD</name>
    <name type="ordered locus">Rfer_1404</name>
</gene>
<sequence>MRFDIVTLFPELFAPFLTSGITRRAFESGLVDVQLANPRDFAAGNYRRVDDRPFGGGPGMVMMAEPLAQCLKSIQSQRTEIAPVLLFSPAGQTLNHAMVQRWSDSQGAILICGRYEGLDQRFIDAYVTEQISLGDFVLSGGEIAAMALLDAVARLQPGVLNAADSHQQDSFNPVLDGLLDCPHYTRPENWLGRPVPEVLLSGHHVQIERWRREQRLALTLRLRPELIDQARRDGRLSRADEAFLASQV</sequence>
<protein>
    <recommendedName>
        <fullName evidence="1">tRNA (guanine-N(1)-)-methyltransferase</fullName>
        <ecNumber evidence="1">2.1.1.228</ecNumber>
    </recommendedName>
    <alternativeName>
        <fullName evidence="1">M1G-methyltransferase</fullName>
    </alternativeName>
    <alternativeName>
        <fullName evidence="1">tRNA [GM37] methyltransferase</fullName>
    </alternativeName>
</protein>
<evidence type="ECO:0000255" key="1">
    <source>
        <dbReference type="HAMAP-Rule" id="MF_00605"/>
    </source>
</evidence>